<feature type="chain" id="PRO_0000411661" description="Probable cell division protein WhiA">
    <location>
        <begin position="1"/>
        <end position="303"/>
    </location>
</feature>
<feature type="DNA-binding region" description="H-T-H motif" evidence="1">
    <location>
        <begin position="272"/>
        <end position="303"/>
    </location>
</feature>
<accession>P0DH43</accession>
<accession>Q79WN1</accession>
<accession>Q8K849</accession>
<evidence type="ECO:0000255" key="1">
    <source>
        <dbReference type="HAMAP-Rule" id="MF_01420"/>
    </source>
</evidence>
<keyword id="KW-0131">Cell cycle</keyword>
<keyword id="KW-0132">Cell division</keyword>
<keyword id="KW-0238">DNA-binding</keyword>
<reference key="1">
    <citation type="journal article" date="2003" name="Genome Res.">
        <title>Genome sequence of an M3 strain of Streptococcus pyogenes reveals a large-scale genomic rearrangement in invasive strains and new insights into phage evolution.</title>
        <authorList>
            <person name="Nakagawa I."/>
            <person name="Kurokawa K."/>
            <person name="Yamashita A."/>
            <person name="Nakata M."/>
            <person name="Tomiyasu Y."/>
            <person name="Okahashi N."/>
            <person name="Kawabata S."/>
            <person name="Yamazaki K."/>
            <person name="Shiba T."/>
            <person name="Yasunaga T."/>
            <person name="Hayashi H."/>
            <person name="Hattori M."/>
            <person name="Hamada S."/>
        </authorList>
    </citation>
    <scope>NUCLEOTIDE SEQUENCE [LARGE SCALE GENOMIC DNA]</scope>
    <source>
        <strain>SSI-1</strain>
    </source>
</reference>
<gene>
    <name evidence="1" type="primary">whiA</name>
    <name type="ordered locus">SPs1391</name>
</gene>
<comment type="function">
    <text evidence="1">Involved in cell division and chromosome segregation.</text>
</comment>
<comment type="similarity">
    <text evidence="1">Belongs to the WhiA family.</text>
</comment>
<proteinExistence type="inferred from homology"/>
<dbReference type="EMBL" id="BA000034">
    <property type="protein sequence ID" value="BAC64486.1"/>
    <property type="molecule type" value="Genomic_DNA"/>
</dbReference>
<dbReference type="RefSeq" id="WP_011054317.1">
    <property type="nucleotide sequence ID" value="NC_004606.1"/>
</dbReference>
<dbReference type="SMR" id="P0DH43"/>
<dbReference type="GeneID" id="69901150"/>
<dbReference type="KEGG" id="sps:SPs1391"/>
<dbReference type="HOGENOM" id="CLU_053282_0_0_9"/>
<dbReference type="GO" id="GO:0003677">
    <property type="term" value="F:DNA binding"/>
    <property type="evidence" value="ECO:0007669"/>
    <property type="project" value="UniProtKB-UniRule"/>
</dbReference>
<dbReference type="GO" id="GO:0051301">
    <property type="term" value="P:cell division"/>
    <property type="evidence" value="ECO:0007669"/>
    <property type="project" value="UniProtKB-UniRule"/>
</dbReference>
<dbReference type="GO" id="GO:0043937">
    <property type="term" value="P:regulation of sporulation"/>
    <property type="evidence" value="ECO:0007669"/>
    <property type="project" value="InterPro"/>
</dbReference>
<dbReference type="Gene3D" id="3.10.28.10">
    <property type="entry name" value="Homing endonucleases"/>
    <property type="match status" value="1"/>
</dbReference>
<dbReference type="HAMAP" id="MF_01420">
    <property type="entry name" value="HTH_type_WhiA"/>
    <property type="match status" value="1"/>
</dbReference>
<dbReference type="InterPro" id="IPR027434">
    <property type="entry name" value="Homing_endonucl"/>
</dbReference>
<dbReference type="InterPro" id="IPR018478">
    <property type="entry name" value="Sporu_reg_WhiA_N_dom"/>
</dbReference>
<dbReference type="InterPro" id="IPR003802">
    <property type="entry name" value="Sporulation_regulator_WhiA"/>
</dbReference>
<dbReference type="InterPro" id="IPR023054">
    <property type="entry name" value="Sporulation_regulator_WhiA_C"/>
</dbReference>
<dbReference type="InterPro" id="IPR039518">
    <property type="entry name" value="WhiA_LAGLIDADG_dom"/>
</dbReference>
<dbReference type="NCBIfam" id="TIGR00647">
    <property type="entry name" value="DNA_bind_WhiA"/>
    <property type="match status" value="1"/>
</dbReference>
<dbReference type="PANTHER" id="PTHR37307">
    <property type="entry name" value="CELL DIVISION PROTEIN WHIA-RELATED"/>
    <property type="match status" value="1"/>
</dbReference>
<dbReference type="PANTHER" id="PTHR37307:SF1">
    <property type="entry name" value="CELL DIVISION PROTEIN WHIA-RELATED"/>
    <property type="match status" value="1"/>
</dbReference>
<dbReference type="Pfam" id="PF02650">
    <property type="entry name" value="HTH_WhiA"/>
    <property type="match status" value="1"/>
</dbReference>
<dbReference type="Pfam" id="PF14527">
    <property type="entry name" value="LAGLIDADG_WhiA"/>
    <property type="match status" value="1"/>
</dbReference>
<dbReference type="Pfam" id="PF10298">
    <property type="entry name" value="WhiA_N"/>
    <property type="match status" value="1"/>
</dbReference>
<dbReference type="SUPFAM" id="SSF55608">
    <property type="entry name" value="Homing endonucleases"/>
    <property type="match status" value="1"/>
</dbReference>
<name>WHIA_STRPQ</name>
<protein>
    <recommendedName>
        <fullName evidence="1">Probable cell division protein WhiA</fullName>
    </recommendedName>
</protein>
<organism>
    <name type="scientific">Streptococcus pyogenes serotype M3 (strain SSI-1)</name>
    <dbReference type="NCBI Taxonomy" id="193567"/>
    <lineage>
        <taxon>Bacteria</taxon>
        <taxon>Bacillati</taxon>
        <taxon>Bacillota</taxon>
        <taxon>Bacilli</taxon>
        <taxon>Lactobacillales</taxon>
        <taxon>Streptococcaceae</taxon>
        <taxon>Streptococcus</taxon>
    </lineage>
</organism>
<sequence length="303" mass="33949">MSFTTKVKEELIHLSTGDNNELAAIIKLSGSLGLAHQSLHLSITTENAKIARYIYSFIEDAYVIVPEIRYHQKTNLRKNRVYTVYVEQGVETILADLKLADSFFGLETGIEPQVLSDDNAGRSYLKGAFLAAGSIRDPESGKYQLEIYSVYLDHAQDLAQLMQKFMLDAKTIEHKSGAVTYLQKAEDIMDFLIIIGAMSCKEDFEAIKLLREARNDINRANNAETANIAKTISASMKTINNIIKIMDTIGLESLPIELQQVAQLRVKHPDYSIQQVADALEFPITKSGVNHRLRKINKIADDL</sequence>